<evidence type="ECO:0000255" key="1">
    <source>
        <dbReference type="HAMAP-Rule" id="MF_00690"/>
    </source>
</evidence>
<dbReference type="EMBL" id="AP009240">
    <property type="protein sequence ID" value="BAG79140.1"/>
    <property type="molecule type" value="Genomic_DNA"/>
</dbReference>
<dbReference type="RefSeq" id="WP_000907085.1">
    <property type="nucleotide sequence ID" value="NC_011415.1"/>
</dbReference>
<dbReference type="SMR" id="B6I2R3"/>
<dbReference type="KEGG" id="ecy:ECSE_3616"/>
<dbReference type="HOGENOM" id="CLU_186759_1_0_6"/>
<dbReference type="Proteomes" id="UP000008199">
    <property type="component" value="Chromosome"/>
</dbReference>
<dbReference type="Gene3D" id="1.10.10.610">
    <property type="entry name" value="YehU-like"/>
    <property type="match status" value="1"/>
</dbReference>
<dbReference type="HAMAP" id="MF_00690">
    <property type="entry name" value="UPF0270"/>
    <property type="match status" value="1"/>
</dbReference>
<dbReference type="InterPro" id="IPR010648">
    <property type="entry name" value="UPF0270"/>
</dbReference>
<dbReference type="InterPro" id="IPR036685">
    <property type="entry name" value="YehU-like_sf"/>
</dbReference>
<dbReference type="NCBIfam" id="NF003438">
    <property type="entry name" value="PRK04966.1"/>
    <property type="match status" value="1"/>
</dbReference>
<dbReference type="Pfam" id="PF06794">
    <property type="entry name" value="UPF0270"/>
    <property type="match status" value="1"/>
</dbReference>
<dbReference type="PIRSF" id="PIRSF006169">
    <property type="entry name" value="UCP006169"/>
    <property type="match status" value="1"/>
</dbReference>
<dbReference type="SUPFAM" id="SSF118001">
    <property type="entry name" value="YehU-like"/>
    <property type="match status" value="1"/>
</dbReference>
<protein>
    <recommendedName>
        <fullName evidence="1">UPF0270 protein YheU</fullName>
    </recommendedName>
</protein>
<sequence>MLIPWQDLSPETLENLIESFVLREGTDYGEHERTLEQKVADVKRQLQCGEAVLVWSELHETVNIMPRSQFRE</sequence>
<accession>B6I2R3</accession>
<gene>
    <name evidence="1" type="primary">yheU</name>
    <name type="ordered locus">ECSE_3616</name>
</gene>
<organism>
    <name type="scientific">Escherichia coli (strain SE11)</name>
    <dbReference type="NCBI Taxonomy" id="409438"/>
    <lineage>
        <taxon>Bacteria</taxon>
        <taxon>Pseudomonadati</taxon>
        <taxon>Pseudomonadota</taxon>
        <taxon>Gammaproteobacteria</taxon>
        <taxon>Enterobacterales</taxon>
        <taxon>Enterobacteriaceae</taxon>
        <taxon>Escherichia</taxon>
    </lineage>
</organism>
<name>YHEU_ECOSE</name>
<proteinExistence type="inferred from homology"/>
<comment type="similarity">
    <text evidence="1">Belongs to the UPF0270 family.</text>
</comment>
<feature type="chain" id="PRO_1000132012" description="UPF0270 protein YheU">
    <location>
        <begin position="1"/>
        <end position="72"/>
    </location>
</feature>
<reference key="1">
    <citation type="journal article" date="2008" name="DNA Res.">
        <title>Complete genome sequence and comparative analysis of the wild-type commensal Escherichia coli strain SE11 isolated from a healthy adult.</title>
        <authorList>
            <person name="Oshima K."/>
            <person name="Toh H."/>
            <person name="Ogura Y."/>
            <person name="Sasamoto H."/>
            <person name="Morita H."/>
            <person name="Park S.-H."/>
            <person name="Ooka T."/>
            <person name="Iyoda S."/>
            <person name="Taylor T.D."/>
            <person name="Hayashi T."/>
            <person name="Itoh K."/>
            <person name="Hattori M."/>
        </authorList>
    </citation>
    <scope>NUCLEOTIDE SEQUENCE [LARGE SCALE GENOMIC DNA]</scope>
    <source>
        <strain>SE11</strain>
    </source>
</reference>